<reference key="1">
    <citation type="journal article" date="2005" name="DNA Res.">
        <title>Complete genome sequence of the facultative anaerobic magnetotactic bacterium Magnetospirillum sp. strain AMB-1.</title>
        <authorList>
            <person name="Matsunaga T."/>
            <person name="Okamura Y."/>
            <person name="Fukuda Y."/>
            <person name="Wahyudi A.T."/>
            <person name="Murase Y."/>
            <person name="Takeyama H."/>
        </authorList>
    </citation>
    <scope>NUCLEOTIDE SEQUENCE [LARGE SCALE GENOMIC DNA]</scope>
    <source>
        <strain>ATCC 700264 / AMB-1</strain>
    </source>
</reference>
<reference evidence="3" key="2">
    <citation type="submission" date="2007-11" db="PDB data bank">
        <title>Crystal structure of an uncharacterized protein from Magnetospirillum magneticum.</title>
        <authorList>
            <person name="Bonanno J.B."/>
            <person name="Dickey M."/>
            <person name="Bain K.T."/>
            <person name="Lau C."/>
            <person name="Romero R."/>
            <person name="Smith D."/>
            <person name="Wasserman S."/>
            <person name="Sauder J.M."/>
            <person name="Burley S.K."/>
            <person name="Almo S.C."/>
        </authorList>
    </citation>
    <scope>X-RAY CRYSTALLOGRAPHY (1.50 ANGSTROMS) OF 2-199</scope>
    <source>
        <strain>ATCC 700264 / AMB-1</strain>
    </source>
</reference>
<feature type="chain" id="PRO_0000452154" description="BREX protein BrxA">
    <location>
        <begin position="1"/>
        <end position="199"/>
    </location>
</feature>
<feature type="helix" evidence="4">
    <location>
        <begin position="9"/>
        <end position="12"/>
    </location>
</feature>
<feature type="helix" evidence="4">
    <location>
        <begin position="17"/>
        <end position="29"/>
    </location>
</feature>
<feature type="helix" evidence="4">
    <location>
        <begin position="33"/>
        <end position="41"/>
    </location>
</feature>
<feature type="helix" evidence="4">
    <location>
        <begin position="55"/>
        <end position="65"/>
    </location>
</feature>
<feature type="helix" evidence="4">
    <location>
        <begin position="70"/>
        <end position="78"/>
    </location>
</feature>
<feature type="helix" evidence="4">
    <location>
        <begin position="81"/>
        <end position="95"/>
    </location>
</feature>
<feature type="helix" evidence="4">
    <location>
        <begin position="97"/>
        <end position="105"/>
    </location>
</feature>
<feature type="helix" evidence="4">
    <location>
        <begin position="107"/>
        <end position="110"/>
    </location>
</feature>
<feature type="strand" evidence="4">
    <location>
        <begin position="113"/>
        <end position="115"/>
    </location>
</feature>
<feature type="helix" evidence="4">
    <location>
        <begin position="120"/>
        <end position="133"/>
    </location>
</feature>
<feature type="helix" evidence="4">
    <location>
        <begin position="143"/>
        <end position="158"/>
    </location>
</feature>
<feature type="helix" evidence="4">
    <location>
        <begin position="177"/>
        <end position="185"/>
    </location>
</feature>
<feature type="helix" evidence="4">
    <location>
        <begin position="189"/>
        <end position="195"/>
    </location>
</feature>
<dbReference type="EMBL" id="AP007255">
    <property type="protein sequence ID" value="BAE50842.1"/>
    <property type="molecule type" value="Genomic_DNA"/>
</dbReference>
<dbReference type="PDB" id="3BHW">
    <property type="method" value="X-ray"/>
    <property type="resolution" value="1.50 A"/>
    <property type="chains" value="A/B=2-199"/>
</dbReference>
<dbReference type="PDBsum" id="3BHW"/>
<dbReference type="SMR" id="Q2W5N3"/>
<dbReference type="STRING" id="342108.amb2038"/>
<dbReference type="KEGG" id="mag:amb2038"/>
<dbReference type="HOGENOM" id="CLU_087567_0_1_5"/>
<dbReference type="OrthoDB" id="981635at2"/>
<dbReference type="EvolutionaryTrace" id="Q2W5N3"/>
<dbReference type="Proteomes" id="UP000007058">
    <property type="component" value="Chromosome"/>
</dbReference>
<dbReference type="GO" id="GO:0051607">
    <property type="term" value="P:defense response to virus"/>
    <property type="evidence" value="ECO:0007669"/>
    <property type="project" value="UniProtKB-KW"/>
</dbReference>
<dbReference type="Gene3D" id="1.10.3540.10">
    <property type="entry name" value="uncharacterized protein from magnetospirillum magneticum domain"/>
    <property type="match status" value="1"/>
</dbReference>
<dbReference type="InterPro" id="IPR014948">
    <property type="entry name" value="BrxA"/>
</dbReference>
<dbReference type="InterPro" id="IPR023137">
    <property type="entry name" value="BrxA_sf"/>
</dbReference>
<dbReference type="Pfam" id="PF08849">
    <property type="entry name" value="BrxA"/>
    <property type="match status" value="1"/>
</dbReference>
<gene>
    <name evidence="2" type="primary">brxA</name>
    <name type="ordered locus">amb2038</name>
</gene>
<organism>
    <name type="scientific">Paramagnetospirillum magneticum (strain ATCC 700264 / AMB-1)</name>
    <name type="common">Magnetospirillum magneticum</name>
    <dbReference type="NCBI Taxonomy" id="342108"/>
    <lineage>
        <taxon>Bacteria</taxon>
        <taxon>Pseudomonadati</taxon>
        <taxon>Pseudomonadota</taxon>
        <taxon>Alphaproteobacteria</taxon>
        <taxon>Rhodospirillales</taxon>
        <taxon>Magnetospirillaceae</taxon>
        <taxon>Paramagnetospirillum</taxon>
    </lineage>
</organism>
<name>BRXA_PARM1</name>
<proteinExistence type="evidence at protein level"/>
<sequence length="199" mass="22963">MAEPRYKADIGGGSLKLPESRIIAGLLLEGVTEDQWRHAIEVENVLQRRSPGTAKRQSSLMRNRLETMGPELWQMVRDGSTQVAIQAVFAAAIKHSTLLGDFLDLVVRDQFRMFRPDLPRKMWDQYLEQCRNRDPLMPVWQDSTANKLADCVYRILVEVGYITDSKTYRLKSVRISGEVMSYLRENNEQYVIRCIQVSI</sequence>
<keyword id="KW-0002">3D-structure</keyword>
<keyword id="KW-0051">Antiviral defense</keyword>
<evidence type="ECO:0000250" key="1">
    <source>
        <dbReference type="UniProtKB" id="P0DUF6"/>
    </source>
</evidence>
<evidence type="ECO:0000305" key="2"/>
<evidence type="ECO:0007744" key="3">
    <source>
        <dbReference type="PDB" id="3BHW"/>
    </source>
</evidence>
<evidence type="ECO:0007829" key="4">
    <source>
        <dbReference type="PDB" id="3BHW"/>
    </source>
</evidence>
<comment type="function">
    <text evidence="1">BREX systems (bacteriophage exclusion) provide immunity against bacteriophage. Part of a type 1 BREX system which protects against dsDNA phage. This system allows phage adsorption but prevents phage DNA replication, without degradation of the phage DNA. Methylation of bacterial DNA by PglX guides self/non-self discrimination.</text>
</comment>
<comment type="similarity">
    <text evidence="2">Belongs to the BrxA family.</text>
</comment>
<accession>Q2W5N3</accession>
<protein>
    <recommendedName>
        <fullName evidence="2">BREX protein BrxA</fullName>
    </recommendedName>
</protein>